<name>RL3_PECCP</name>
<gene>
    <name evidence="1" type="primary">rplC</name>
    <name type="ordered locus">PC1_3822</name>
</gene>
<keyword id="KW-0488">Methylation</keyword>
<keyword id="KW-0687">Ribonucleoprotein</keyword>
<keyword id="KW-0689">Ribosomal protein</keyword>
<keyword id="KW-0694">RNA-binding</keyword>
<keyword id="KW-0699">rRNA-binding</keyword>
<feature type="chain" id="PRO_1000214515" description="Large ribosomal subunit protein uL3">
    <location>
        <begin position="1"/>
        <end position="209"/>
    </location>
</feature>
<feature type="region of interest" description="Disordered" evidence="2">
    <location>
        <begin position="133"/>
        <end position="153"/>
    </location>
</feature>
<feature type="modified residue" description="N5-methylglutamine" evidence="1">
    <location>
        <position position="150"/>
    </location>
</feature>
<evidence type="ECO:0000255" key="1">
    <source>
        <dbReference type="HAMAP-Rule" id="MF_01325"/>
    </source>
</evidence>
<evidence type="ECO:0000256" key="2">
    <source>
        <dbReference type="SAM" id="MobiDB-lite"/>
    </source>
</evidence>
<evidence type="ECO:0000305" key="3"/>
<accession>C6DG74</accession>
<protein>
    <recommendedName>
        <fullName evidence="1">Large ribosomal subunit protein uL3</fullName>
    </recommendedName>
    <alternativeName>
        <fullName evidence="3">50S ribosomal protein L3</fullName>
    </alternativeName>
</protein>
<comment type="function">
    <text evidence="1">One of the primary rRNA binding proteins, it binds directly near the 3'-end of the 23S rRNA, where it nucleates assembly of the 50S subunit.</text>
</comment>
<comment type="subunit">
    <text evidence="1">Part of the 50S ribosomal subunit. Forms a cluster with proteins L14 and L19.</text>
</comment>
<comment type="PTM">
    <text evidence="1">Methylated by PrmB.</text>
</comment>
<comment type="similarity">
    <text evidence="1">Belongs to the universal ribosomal protein uL3 family.</text>
</comment>
<organism>
    <name type="scientific">Pectobacterium carotovorum subsp. carotovorum (strain PC1)</name>
    <dbReference type="NCBI Taxonomy" id="561230"/>
    <lineage>
        <taxon>Bacteria</taxon>
        <taxon>Pseudomonadati</taxon>
        <taxon>Pseudomonadota</taxon>
        <taxon>Gammaproteobacteria</taxon>
        <taxon>Enterobacterales</taxon>
        <taxon>Pectobacteriaceae</taxon>
        <taxon>Pectobacterium</taxon>
    </lineage>
</organism>
<proteinExistence type="inferred from homology"/>
<reference key="1">
    <citation type="submission" date="2009-07" db="EMBL/GenBank/DDBJ databases">
        <title>Complete sequence of Pectobacterium carotovorum subsp. carotovorum PC1.</title>
        <authorList>
            <consortium name="US DOE Joint Genome Institute"/>
            <person name="Lucas S."/>
            <person name="Copeland A."/>
            <person name="Lapidus A."/>
            <person name="Glavina del Rio T."/>
            <person name="Tice H."/>
            <person name="Bruce D."/>
            <person name="Goodwin L."/>
            <person name="Pitluck S."/>
            <person name="Munk A.C."/>
            <person name="Brettin T."/>
            <person name="Detter J.C."/>
            <person name="Han C."/>
            <person name="Tapia R."/>
            <person name="Larimer F."/>
            <person name="Land M."/>
            <person name="Hauser L."/>
            <person name="Kyrpides N."/>
            <person name="Mikhailova N."/>
            <person name="Balakrishnan V."/>
            <person name="Glasner J."/>
            <person name="Perna N.T."/>
        </authorList>
    </citation>
    <scope>NUCLEOTIDE SEQUENCE [LARGE SCALE GENOMIC DNA]</scope>
    <source>
        <strain>PC1</strain>
    </source>
</reference>
<dbReference type="EMBL" id="CP001657">
    <property type="protein sequence ID" value="ACT14837.1"/>
    <property type="molecule type" value="Genomic_DNA"/>
</dbReference>
<dbReference type="RefSeq" id="WP_010304941.1">
    <property type="nucleotide sequence ID" value="NC_012917.1"/>
</dbReference>
<dbReference type="SMR" id="C6DG74"/>
<dbReference type="STRING" id="561230.PC1_3822"/>
<dbReference type="GeneID" id="93391980"/>
<dbReference type="KEGG" id="pct:PC1_3822"/>
<dbReference type="eggNOG" id="COG0087">
    <property type="taxonomic scope" value="Bacteria"/>
</dbReference>
<dbReference type="HOGENOM" id="CLU_044142_4_1_6"/>
<dbReference type="OrthoDB" id="9806135at2"/>
<dbReference type="Proteomes" id="UP000002736">
    <property type="component" value="Chromosome"/>
</dbReference>
<dbReference type="GO" id="GO:0022625">
    <property type="term" value="C:cytosolic large ribosomal subunit"/>
    <property type="evidence" value="ECO:0007669"/>
    <property type="project" value="TreeGrafter"/>
</dbReference>
<dbReference type="GO" id="GO:0019843">
    <property type="term" value="F:rRNA binding"/>
    <property type="evidence" value="ECO:0007669"/>
    <property type="project" value="UniProtKB-UniRule"/>
</dbReference>
<dbReference type="GO" id="GO:0003735">
    <property type="term" value="F:structural constituent of ribosome"/>
    <property type="evidence" value="ECO:0007669"/>
    <property type="project" value="InterPro"/>
</dbReference>
<dbReference type="GO" id="GO:0006412">
    <property type="term" value="P:translation"/>
    <property type="evidence" value="ECO:0007669"/>
    <property type="project" value="UniProtKB-UniRule"/>
</dbReference>
<dbReference type="FunFam" id="2.40.30.10:FF:000004">
    <property type="entry name" value="50S ribosomal protein L3"/>
    <property type="match status" value="1"/>
</dbReference>
<dbReference type="FunFam" id="3.30.160.810:FF:000001">
    <property type="entry name" value="50S ribosomal protein L3"/>
    <property type="match status" value="1"/>
</dbReference>
<dbReference type="Gene3D" id="3.30.160.810">
    <property type="match status" value="1"/>
</dbReference>
<dbReference type="Gene3D" id="2.40.30.10">
    <property type="entry name" value="Translation factors"/>
    <property type="match status" value="1"/>
</dbReference>
<dbReference type="HAMAP" id="MF_01325_B">
    <property type="entry name" value="Ribosomal_uL3_B"/>
    <property type="match status" value="1"/>
</dbReference>
<dbReference type="InterPro" id="IPR000597">
    <property type="entry name" value="Ribosomal_uL3"/>
</dbReference>
<dbReference type="InterPro" id="IPR019927">
    <property type="entry name" value="Ribosomal_uL3_bac/org-type"/>
</dbReference>
<dbReference type="InterPro" id="IPR019926">
    <property type="entry name" value="Ribosomal_uL3_CS"/>
</dbReference>
<dbReference type="InterPro" id="IPR009000">
    <property type="entry name" value="Transl_B-barrel_sf"/>
</dbReference>
<dbReference type="NCBIfam" id="TIGR03625">
    <property type="entry name" value="L3_bact"/>
    <property type="match status" value="1"/>
</dbReference>
<dbReference type="PANTHER" id="PTHR11229">
    <property type="entry name" value="50S RIBOSOMAL PROTEIN L3"/>
    <property type="match status" value="1"/>
</dbReference>
<dbReference type="PANTHER" id="PTHR11229:SF16">
    <property type="entry name" value="LARGE RIBOSOMAL SUBUNIT PROTEIN UL3C"/>
    <property type="match status" value="1"/>
</dbReference>
<dbReference type="Pfam" id="PF00297">
    <property type="entry name" value="Ribosomal_L3"/>
    <property type="match status" value="1"/>
</dbReference>
<dbReference type="SUPFAM" id="SSF50447">
    <property type="entry name" value="Translation proteins"/>
    <property type="match status" value="1"/>
</dbReference>
<dbReference type="PROSITE" id="PS00474">
    <property type="entry name" value="RIBOSOMAL_L3"/>
    <property type="match status" value="1"/>
</dbReference>
<sequence>MIGLVGKKVGMTRIFTEDGVSIPVTVIEIEANRVTQVKDLANDGYRAVQVTTGAKKANRVTKPEAGHFAKAGVEAGRTLREFRLSEGEEFTVGQSISVEIFADVKKVDVTGTSKGKGFAGTVKRWNFRTQDATHGNSLSHRVPGSIGQNQTPGKVFKGKKMAGQLGNERVTVQSLDVVRVDAERNLLLVKGAVPGATGSDLIVKPAVKA</sequence>